<accession>P26726</accession>
<gene>
    <name type="primary">BBXA3</name>
</gene>
<dbReference type="EMBL" id="M26069">
    <property type="protein sequence ID" value="AAA27827.1"/>
    <property type="molecule type" value="Genomic_DNA"/>
</dbReference>
<dbReference type="PIR" id="B41391">
    <property type="entry name" value="IPMTA3"/>
</dbReference>
<dbReference type="RefSeq" id="NP_001166890.1">
    <property type="nucleotide sequence ID" value="NM_001173419.1"/>
</dbReference>
<dbReference type="SMR" id="P26726"/>
<dbReference type="FunCoup" id="P26726">
    <property type="interactions" value="162"/>
</dbReference>
<dbReference type="STRING" id="7091.P26726"/>
<dbReference type="PaxDb" id="7091-BGIBMGA014495-TA"/>
<dbReference type="EnsemblMetazoa" id="NM_001173419.1">
    <property type="protein sequence ID" value="NP_001166890.1"/>
    <property type="gene ID" value="GeneID_100169712"/>
</dbReference>
<dbReference type="GeneID" id="100169712"/>
<dbReference type="KEGG" id="bmor:100169712"/>
<dbReference type="CTD" id="100169712"/>
<dbReference type="eggNOG" id="ENOG502SESX">
    <property type="taxonomic scope" value="Eukaryota"/>
</dbReference>
<dbReference type="HOGENOM" id="CLU_125164_2_0_1"/>
<dbReference type="InParanoid" id="P26726"/>
<dbReference type="OMA" id="FAMCYIS"/>
<dbReference type="OrthoDB" id="493443at7088"/>
<dbReference type="Proteomes" id="UP000005204">
    <property type="component" value="Unassembled WGS sequence"/>
</dbReference>
<dbReference type="GO" id="GO:0005615">
    <property type="term" value="C:extracellular space"/>
    <property type="evidence" value="ECO:0007669"/>
    <property type="project" value="InterPro"/>
</dbReference>
<dbReference type="GO" id="GO:0008083">
    <property type="term" value="F:growth factor activity"/>
    <property type="evidence" value="ECO:0007669"/>
    <property type="project" value="InterPro"/>
</dbReference>
<dbReference type="GO" id="GO:0005179">
    <property type="term" value="F:hormone activity"/>
    <property type="evidence" value="ECO:0007669"/>
    <property type="project" value="UniProtKB-KW"/>
</dbReference>
<dbReference type="CDD" id="cd04366">
    <property type="entry name" value="IlGF_insulin_bombyxin_like"/>
    <property type="match status" value="1"/>
</dbReference>
<dbReference type="Gene3D" id="1.10.100.10">
    <property type="entry name" value="Insulin-like"/>
    <property type="match status" value="1"/>
</dbReference>
<dbReference type="InterPro" id="IPR017097">
    <property type="entry name" value="Bombyxin"/>
</dbReference>
<dbReference type="InterPro" id="IPR030680">
    <property type="entry name" value="Bombyxin_A"/>
</dbReference>
<dbReference type="InterPro" id="IPR016179">
    <property type="entry name" value="Insulin-like"/>
</dbReference>
<dbReference type="InterPro" id="IPR036438">
    <property type="entry name" value="Insulin-like_sf"/>
</dbReference>
<dbReference type="InterPro" id="IPR022353">
    <property type="entry name" value="Insulin_CS"/>
</dbReference>
<dbReference type="InterPro" id="IPR022352">
    <property type="entry name" value="Insulin_family"/>
</dbReference>
<dbReference type="PANTHER" id="PTHR13647:SF4">
    <property type="entry name" value="INSULIN-LIKE PEPTIDE 1-RELATED"/>
    <property type="match status" value="1"/>
</dbReference>
<dbReference type="PANTHER" id="PTHR13647">
    <property type="entry name" value="INSULIN-LIKE PEPTIDE 2-RELATED"/>
    <property type="match status" value="1"/>
</dbReference>
<dbReference type="Pfam" id="PF00049">
    <property type="entry name" value="Insulin"/>
    <property type="match status" value="1"/>
</dbReference>
<dbReference type="PIRSF" id="PIRSF037038">
    <property type="entry name" value="Bombyxin"/>
    <property type="match status" value="1"/>
</dbReference>
<dbReference type="PIRSF" id="PIRSF500312">
    <property type="entry name" value="Bombyxin_A"/>
    <property type="match status" value="1"/>
</dbReference>
<dbReference type="PRINTS" id="PR02003">
    <property type="entry name" value="BOMBYXIN"/>
</dbReference>
<dbReference type="PRINTS" id="PR00276">
    <property type="entry name" value="INSULINFAMLY"/>
</dbReference>
<dbReference type="SMART" id="SM00078">
    <property type="entry name" value="IlGF"/>
    <property type="match status" value="1"/>
</dbReference>
<dbReference type="SUPFAM" id="SSF56994">
    <property type="entry name" value="Insulin-like"/>
    <property type="match status" value="1"/>
</dbReference>
<dbReference type="PROSITE" id="PS00262">
    <property type="entry name" value="INSULIN"/>
    <property type="match status" value="1"/>
</dbReference>
<evidence type="ECO:0000250" key="1"/>
<evidence type="ECO:0000305" key="2"/>
<organism>
    <name type="scientific">Bombyx mori</name>
    <name type="common">Silk moth</name>
    <dbReference type="NCBI Taxonomy" id="7091"/>
    <lineage>
        <taxon>Eukaryota</taxon>
        <taxon>Metazoa</taxon>
        <taxon>Ecdysozoa</taxon>
        <taxon>Arthropoda</taxon>
        <taxon>Hexapoda</taxon>
        <taxon>Insecta</taxon>
        <taxon>Pterygota</taxon>
        <taxon>Neoptera</taxon>
        <taxon>Endopterygota</taxon>
        <taxon>Lepidoptera</taxon>
        <taxon>Glossata</taxon>
        <taxon>Ditrysia</taxon>
        <taxon>Bombycoidea</taxon>
        <taxon>Bombycidae</taxon>
        <taxon>Bombycinae</taxon>
        <taxon>Bombyx</taxon>
    </lineage>
</organism>
<keyword id="KW-0165">Cleavage on pair of basic residues</keyword>
<keyword id="KW-1015">Disulfide bond</keyword>
<keyword id="KW-0372">Hormone</keyword>
<keyword id="KW-0873">Pyrrolidone carboxylic acid</keyword>
<keyword id="KW-1185">Reference proteome</keyword>
<keyword id="KW-0964">Secreted</keyword>
<keyword id="KW-0732">Signal</keyword>
<feature type="signal peptide" evidence="1">
    <location>
        <begin position="1"/>
        <end position="19"/>
    </location>
</feature>
<feature type="peptide" id="PRO_0000015968" description="Bombyxin A-3 B chain">
    <location>
        <begin position="20"/>
        <end position="47"/>
    </location>
</feature>
<feature type="propeptide" id="PRO_0000015969" description="C peptide like">
    <location>
        <begin position="50"/>
        <end position="70"/>
    </location>
</feature>
<feature type="peptide" id="PRO_0000015970" description="Bombyxin A-3 A chain">
    <location>
        <begin position="73"/>
        <end position="92"/>
    </location>
</feature>
<feature type="modified residue" description="Pyrrolidone carboxylic acid" evidence="1">
    <location>
        <position position="20"/>
    </location>
</feature>
<feature type="disulfide bond" description="Interchain (between B and A chains)" evidence="1">
    <location>
        <begin position="29"/>
        <end position="79"/>
    </location>
</feature>
<feature type="disulfide bond" description="Interchain (between B and A chains)" evidence="1">
    <location>
        <begin position="41"/>
        <end position="92"/>
    </location>
</feature>
<feature type="disulfide bond" evidence="1">
    <location>
        <begin position="78"/>
        <end position="83"/>
    </location>
</feature>
<proteinExistence type="inferred from homology"/>
<name>BXA3_BOMMO</name>
<reference key="1">
    <citation type="journal article" date="1989" name="Proc. Natl. Acad. Sci. U.S.A.">
        <title>Structure and organization of four clustered genes that encode bombyxin, an insulin-related brain secretory peptide of the silkmoth Bombyx mori.</title>
        <authorList>
            <person name="Kawakami A."/>
            <person name="Iwami M."/>
            <person name="Nagasawa H."/>
            <person name="Suzuki A."/>
            <person name="Ishizaki H."/>
        </authorList>
    </citation>
    <scope>NUCLEOTIDE SEQUENCE [GENOMIC DNA]</scope>
</reference>
<sequence>MKILLAIALMLSTVMWVSTQQPQGVHTYCGRHLARTLANLCWEAGVDKRSDAQYVSYGSAWLMPYSEGRGKRGIVDECCLRPCSVDVLLSYC</sequence>
<protein>
    <recommendedName>
        <fullName>Bombyxin A-3</fullName>
        <shortName>BBX-A3</shortName>
    </recommendedName>
    <alternativeName>
        <fullName>4K-prothoracicotropic hormone</fullName>
        <shortName>4K-PTTH</shortName>
    </alternativeName>
    <component>
        <recommendedName>
            <fullName>Bombyxin A-3 B chain</fullName>
        </recommendedName>
    </component>
    <component>
        <recommendedName>
            <fullName>Bombyxin A-3 A chain</fullName>
        </recommendedName>
    </component>
</protein>
<comment type="function">
    <text>Brain peptide responsible for activation of prothoracic glands to produce ecdysone in insects.</text>
</comment>
<comment type="subunit">
    <text>Heterodimer of a B chain and an A chain linked by two disulfide bonds.</text>
</comment>
<comment type="subcellular location">
    <subcellularLocation>
        <location>Secreted</location>
    </subcellularLocation>
</comment>
<comment type="miscellaneous">
    <text>Silk worm has two kinds of PTTH: 4K-PTTH and 22K-PTTH; there are many forms of 4K-PTTH.</text>
</comment>
<comment type="similarity">
    <text evidence="2">Belongs to the insulin family.</text>
</comment>